<protein>
    <recommendedName>
        <fullName evidence="1">RNA-binding protein Hfq</fullName>
    </recommendedName>
</protein>
<evidence type="ECO:0000255" key="1">
    <source>
        <dbReference type="HAMAP-Rule" id="MF_00436"/>
    </source>
</evidence>
<evidence type="ECO:0000255" key="2">
    <source>
        <dbReference type="PROSITE-ProRule" id="PRU01346"/>
    </source>
</evidence>
<dbReference type="EMBL" id="AE016879">
    <property type="protein sequence ID" value="AAP27579.1"/>
    <property type="molecule type" value="Genomic_DNA"/>
</dbReference>
<dbReference type="EMBL" id="AE017334">
    <property type="protein sequence ID" value="AAT32953.1"/>
    <property type="molecule type" value="Genomic_DNA"/>
</dbReference>
<dbReference type="EMBL" id="AE017225">
    <property type="protein sequence ID" value="AAT55863.1"/>
    <property type="molecule type" value="Genomic_DNA"/>
</dbReference>
<dbReference type="RefSeq" id="NP_846093.1">
    <property type="nucleotide sequence ID" value="NC_003997.3"/>
</dbReference>
<dbReference type="RefSeq" id="WP_000813896.1">
    <property type="nucleotide sequence ID" value="NZ_WXXJ01000001.1"/>
</dbReference>
<dbReference type="RefSeq" id="YP_029812.1">
    <property type="nucleotide sequence ID" value="NC_005945.1"/>
</dbReference>
<dbReference type="SMR" id="Q81WX1"/>
<dbReference type="STRING" id="261594.GBAA_3842"/>
<dbReference type="DNASU" id="1085330"/>
<dbReference type="GeneID" id="93007416"/>
<dbReference type="KEGG" id="ban:BA_3842"/>
<dbReference type="KEGG" id="bar:GBAA_3842"/>
<dbReference type="KEGG" id="bat:BAS3559"/>
<dbReference type="PATRIC" id="fig|198094.11.peg.3810"/>
<dbReference type="eggNOG" id="COG1923">
    <property type="taxonomic scope" value="Bacteria"/>
</dbReference>
<dbReference type="HOGENOM" id="CLU_113688_3_0_9"/>
<dbReference type="OMA" id="QQMVYKH"/>
<dbReference type="OrthoDB" id="9799751at2"/>
<dbReference type="Proteomes" id="UP000000427">
    <property type="component" value="Chromosome"/>
</dbReference>
<dbReference type="Proteomes" id="UP000000594">
    <property type="component" value="Chromosome"/>
</dbReference>
<dbReference type="GO" id="GO:0005829">
    <property type="term" value="C:cytosol"/>
    <property type="evidence" value="ECO:0007669"/>
    <property type="project" value="TreeGrafter"/>
</dbReference>
<dbReference type="GO" id="GO:0003723">
    <property type="term" value="F:RNA binding"/>
    <property type="evidence" value="ECO:0007669"/>
    <property type="project" value="UniProtKB-UniRule"/>
</dbReference>
<dbReference type="GO" id="GO:0006355">
    <property type="term" value="P:regulation of DNA-templated transcription"/>
    <property type="evidence" value="ECO:0007669"/>
    <property type="project" value="InterPro"/>
</dbReference>
<dbReference type="GO" id="GO:0043487">
    <property type="term" value="P:regulation of RNA stability"/>
    <property type="evidence" value="ECO:0007669"/>
    <property type="project" value="TreeGrafter"/>
</dbReference>
<dbReference type="GO" id="GO:0045974">
    <property type="term" value="P:regulation of translation, ncRNA-mediated"/>
    <property type="evidence" value="ECO:0007669"/>
    <property type="project" value="TreeGrafter"/>
</dbReference>
<dbReference type="CDD" id="cd01716">
    <property type="entry name" value="Hfq"/>
    <property type="match status" value="1"/>
</dbReference>
<dbReference type="FunFam" id="2.30.30.100:FF:000012">
    <property type="entry name" value="RNA-binding protein Hfq"/>
    <property type="match status" value="1"/>
</dbReference>
<dbReference type="Gene3D" id="2.30.30.100">
    <property type="match status" value="1"/>
</dbReference>
<dbReference type="HAMAP" id="MF_00436">
    <property type="entry name" value="Hfq"/>
    <property type="match status" value="1"/>
</dbReference>
<dbReference type="InterPro" id="IPR005001">
    <property type="entry name" value="Hfq"/>
</dbReference>
<dbReference type="InterPro" id="IPR010920">
    <property type="entry name" value="LSM_dom_sf"/>
</dbReference>
<dbReference type="InterPro" id="IPR047575">
    <property type="entry name" value="Sm"/>
</dbReference>
<dbReference type="NCBIfam" id="TIGR02383">
    <property type="entry name" value="Hfq"/>
    <property type="match status" value="1"/>
</dbReference>
<dbReference type="NCBIfam" id="NF001602">
    <property type="entry name" value="PRK00395.1"/>
    <property type="match status" value="1"/>
</dbReference>
<dbReference type="PANTHER" id="PTHR34772">
    <property type="entry name" value="RNA-BINDING PROTEIN HFQ"/>
    <property type="match status" value="1"/>
</dbReference>
<dbReference type="PANTHER" id="PTHR34772:SF1">
    <property type="entry name" value="RNA-BINDING PROTEIN HFQ"/>
    <property type="match status" value="1"/>
</dbReference>
<dbReference type="Pfam" id="PF17209">
    <property type="entry name" value="Hfq"/>
    <property type="match status" value="1"/>
</dbReference>
<dbReference type="SUPFAM" id="SSF50182">
    <property type="entry name" value="Sm-like ribonucleoproteins"/>
    <property type="match status" value="1"/>
</dbReference>
<dbReference type="PROSITE" id="PS52002">
    <property type="entry name" value="SM"/>
    <property type="match status" value="1"/>
</dbReference>
<accession>Q81WX1</accession>
<accession>Q6HV26</accession>
<accession>Q6KPA0</accession>
<comment type="function">
    <text evidence="1">RNA chaperone that binds small regulatory RNA (sRNAs) and mRNAs to facilitate mRNA translational regulation in response to envelope stress, environmental stress and changes in metabolite concentrations. Also binds with high specificity to tRNAs.</text>
</comment>
<comment type="subunit">
    <text evidence="1">Homohexamer.</text>
</comment>
<comment type="similarity">
    <text evidence="1">Belongs to the Hfq family.</text>
</comment>
<gene>
    <name evidence="1" type="primary">hfq</name>
    <name type="ordered locus">BA_3842</name>
    <name type="ordered locus">GBAA_3842</name>
    <name type="ordered locus">BAS3559</name>
</gene>
<reference key="1">
    <citation type="journal article" date="2003" name="Nature">
        <title>The genome sequence of Bacillus anthracis Ames and comparison to closely related bacteria.</title>
        <authorList>
            <person name="Read T.D."/>
            <person name="Peterson S.N."/>
            <person name="Tourasse N.J."/>
            <person name="Baillie L.W."/>
            <person name="Paulsen I.T."/>
            <person name="Nelson K.E."/>
            <person name="Tettelin H."/>
            <person name="Fouts D.E."/>
            <person name="Eisen J.A."/>
            <person name="Gill S.R."/>
            <person name="Holtzapple E.K."/>
            <person name="Okstad O.A."/>
            <person name="Helgason E."/>
            <person name="Rilstone J."/>
            <person name="Wu M."/>
            <person name="Kolonay J.F."/>
            <person name="Beanan M.J."/>
            <person name="Dodson R.J."/>
            <person name="Brinkac L.M."/>
            <person name="Gwinn M.L."/>
            <person name="DeBoy R.T."/>
            <person name="Madpu R."/>
            <person name="Daugherty S.C."/>
            <person name="Durkin A.S."/>
            <person name="Haft D.H."/>
            <person name="Nelson W.C."/>
            <person name="Peterson J.D."/>
            <person name="Pop M."/>
            <person name="Khouri H.M."/>
            <person name="Radune D."/>
            <person name="Benton J.L."/>
            <person name="Mahamoud Y."/>
            <person name="Jiang L."/>
            <person name="Hance I.R."/>
            <person name="Weidman J.F."/>
            <person name="Berry K.J."/>
            <person name="Plaut R.D."/>
            <person name="Wolf A.M."/>
            <person name="Watkins K.L."/>
            <person name="Nierman W.C."/>
            <person name="Hazen A."/>
            <person name="Cline R.T."/>
            <person name="Redmond C."/>
            <person name="Thwaite J.E."/>
            <person name="White O."/>
            <person name="Salzberg S.L."/>
            <person name="Thomason B."/>
            <person name="Friedlander A.M."/>
            <person name="Koehler T.M."/>
            <person name="Hanna P.C."/>
            <person name="Kolstoe A.-B."/>
            <person name="Fraser C.M."/>
        </authorList>
    </citation>
    <scope>NUCLEOTIDE SEQUENCE [LARGE SCALE GENOMIC DNA]</scope>
    <source>
        <strain>Ames / isolate Porton</strain>
    </source>
</reference>
<reference key="2">
    <citation type="journal article" date="2009" name="J. Bacteriol.">
        <title>The complete genome sequence of Bacillus anthracis Ames 'Ancestor'.</title>
        <authorList>
            <person name="Ravel J."/>
            <person name="Jiang L."/>
            <person name="Stanley S.T."/>
            <person name="Wilson M.R."/>
            <person name="Decker R.S."/>
            <person name="Read T.D."/>
            <person name="Worsham P."/>
            <person name="Keim P.S."/>
            <person name="Salzberg S.L."/>
            <person name="Fraser-Liggett C.M."/>
            <person name="Rasko D.A."/>
        </authorList>
    </citation>
    <scope>NUCLEOTIDE SEQUENCE [LARGE SCALE GENOMIC DNA]</scope>
    <source>
        <strain>Ames ancestor</strain>
    </source>
</reference>
<reference key="3">
    <citation type="submission" date="2004-01" db="EMBL/GenBank/DDBJ databases">
        <title>Complete genome sequence of Bacillus anthracis Sterne.</title>
        <authorList>
            <person name="Brettin T.S."/>
            <person name="Bruce D."/>
            <person name="Challacombe J.F."/>
            <person name="Gilna P."/>
            <person name="Han C."/>
            <person name="Hill K."/>
            <person name="Hitchcock P."/>
            <person name="Jackson P."/>
            <person name="Keim P."/>
            <person name="Longmire J."/>
            <person name="Lucas S."/>
            <person name="Okinaka R."/>
            <person name="Richardson P."/>
            <person name="Rubin E."/>
            <person name="Tice H."/>
        </authorList>
    </citation>
    <scope>NUCLEOTIDE SEQUENCE [LARGE SCALE GENOMIC DNA]</scope>
    <source>
        <strain>Sterne</strain>
    </source>
</reference>
<proteinExistence type="inferred from homology"/>
<organism>
    <name type="scientific">Bacillus anthracis</name>
    <dbReference type="NCBI Taxonomy" id="1392"/>
    <lineage>
        <taxon>Bacteria</taxon>
        <taxon>Bacillati</taxon>
        <taxon>Bacillota</taxon>
        <taxon>Bacilli</taxon>
        <taxon>Bacillales</taxon>
        <taxon>Bacillaceae</taxon>
        <taxon>Bacillus</taxon>
        <taxon>Bacillus cereus group</taxon>
    </lineage>
</organism>
<keyword id="KW-1185">Reference proteome</keyword>
<keyword id="KW-0694">RNA-binding</keyword>
<keyword id="KW-0346">Stress response</keyword>
<feature type="chain" id="PRO_0000095614" description="RNA-binding protein Hfq">
    <location>
        <begin position="1"/>
        <end position="74"/>
    </location>
</feature>
<feature type="domain" description="Sm" evidence="2">
    <location>
        <begin position="9"/>
        <end position="69"/>
    </location>
</feature>
<name>HFQ_BACAN</name>
<sequence>MKQSINIQDQFLNQLRKENTFVTLYLLNGFQLRGLIKGFDNFTVLLETEGKQQLIYKHAISTFVPQKNVSIELE</sequence>